<protein>
    <recommendedName>
        <fullName evidence="1">Small ribosomal subunit protein uS10</fullName>
    </recommendedName>
    <alternativeName>
        <fullName evidence="2">30S ribosomal protein S10</fullName>
    </alternativeName>
</protein>
<sequence>MKQDIYINIKAFDCSLLEECVRKFVDELKRSSAKLSGPIALPRKDSKFIVNRSPHVDKKSREQFEMRTSRRLIVLHDLTPTMMQMLTGLSFSAGVEVDLKVKEVKV</sequence>
<feature type="chain" id="PRO_1000146088" description="Small ribosomal subunit protein uS10">
    <location>
        <begin position="1"/>
        <end position="106"/>
    </location>
</feature>
<name>RS10_WOLWR</name>
<reference key="1">
    <citation type="journal article" date="2009" name="Proc. Natl. Acad. Sci. U.S.A.">
        <title>The mosaic genome structure of the Wolbachia wRi strain infecting Drosophila simulans.</title>
        <authorList>
            <person name="Klasson L."/>
            <person name="Westberg J."/>
            <person name="Sapountzis P."/>
            <person name="Naeslund K."/>
            <person name="Lutnaes Y."/>
            <person name="Darby A.C."/>
            <person name="Veneti Z."/>
            <person name="Chen L."/>
            <person name="Braig H.R."/>
            <person name="Garrett R."/>
            <person name="Bourtzis K."/>
            <person name="Andersson S.G."/>
        </authorList>
    </citation>
    <scope>NUCLEOTIDE SEQUENCE [LARGE SCALE GENOMIC DNA]</scope>
    <source>
        <strain>wRi</strain>
    </source>
</reference>
<dbReference type="EMBL" id="CP001391">
    <property type="protein sequence ID" value="ACN95302.1"/>
    <property type="molecule type" value="Genomic_DNA"/>
</dbReference>
<dbReference type="RefSeq" id="WP_012673184.1">
    <property type="nucleotide sequence ID" value="NZ_MKIF01000201.1"/>
</dbReference>
<dbReference type="SMR" id="C0R310"/>
<dbReference type="STRING" id="66084.WRi_005200"/>
<dbReference type="KEGG" id="wri:WRi_005200"/>
<dbReference type="HOGENOM" id="CLU_122625_1_3_5"/>
<dbReference type="Proteomes" id="UP000001293">
    <property type="component" value="Chromosome"/>
</dbReference>
<dbReference type="GO" id="GO:1990904">
    <property type="term" value="C:ribonucleoprotein complex"/>
    <property type="evidence" value="ECO:0007669"/>
    <property type="project" value="UniProtKB-KW"/>
</dbReference>
<dbReference type="GO" id="GO:0005840">
    <property type="term" value="C:ribosome"/>
    <property type="evidence" value="ECO:0007669"/>
    <property type="project" value="UniProtKB-KW"/>
</dbReference>
<dbReference type="GO" id="GO:0003735">
    <property type="term" value="F:structural constituent of ribosome"/>
    <property type="evidence" value="ECO:0007669"/>
    <property type="project" value="InterPro"/>
</dbReference>
<dbReference type="GO" id="GO:0000049">
    <property type="term" value="F:tRNA binding"/>
    <property type="evidence" value="ECO:0007669"/>
    <property type="project" value="UniProtKB-UniRule"/>
</dbReference>
<dbReference type="GO" id="GO:0006412">
    <property type="term" value="P:translation"/>
    <property type="evidence" value="ECO:0007669"/>
    <property type="project" value="UniProtKB-UniRule"/>
</dbReference>
<dbReference type="Gene3D" id="3.30.70.600">
    <property type="entry name" value="Ribosomal protein S10 domain"/>
    <property type="match status" value="1"/>
</dbReference>
<dbReference type="HAMAP" id="MF_00508">
    <property type="entry name" value="Ribosomal_uS10"/>
    <property type="match status" value="1"/>
</dbReference>
<dbReference type="InterPro" id="IPR001848">
    <property type="entry name" value="Ribosomal_uS10"/>
</dbReference>
<dbReference type="InterPro" id="IPR027486">
    <property type="entry name" value="Ribosomal_uS10_dom"/>
</dbReference>
<dbReference type="InterPro" id="IPR036838">
    <property type="entry name" value="Ribosomal_uS10_dom_sf"/>
</dbReference>
<dbReference type="NCBIfam" id="NF001861">
    <property type="entry name" value="PRK00596.1"/>
    <property type="match status" value="1"/>
</dbReference>
<dbReference type="NCBIfam" id="TIGR01049">
    <property type="entry name" value="rpsJ_bact"/>
    <property type="match status" value="1"/>
</dbReference>
<dbReference type="PANTHER" id="PTHR11700">
    <property type="entry name" value="30S RIBOSOMAL PROTEIN S10 FAMILY MEMBER"/>
    <property type="match status" value="1"/>
</dbReference>
<dbReference type="Pfam" id="PF00338">
    <property type="entry name" value="Ribosomal_S10"/>
    <property type="match status" value="1"/>
</dbReference>
<dbReference type="PRINTS" id="PR00971">
    <property type="entry name" value="RIBOSOMALS10"/>
</dbReference>
<dbReference type="SMART" id="SM01403">
    <property type="entry name" value="Ribosomal_S10"/>
    <property type="match status" value="1"/>
</dbReference>
<dbReference type="SUPFAM" id="SSF54999">
    <property type="entry name" value="Ribosomal protein S10"/>
    <property type="match status" value="1"/>
</dbReference>
<gene>
    <name evidence="1" type="primary">rpsJ</name>
    <name type="ordered locus">WRi_005200</name>
</gene>
<organism>
    <name type="scientific">Wolbachia sp. subsp. Drosophila simulans (strain wRi)</name>
    <dbReference type="NCBI Taxonomy" id="66084"/>
    <lineage>
        <taxon>Bacteria</taxon>
        <taxon>Pseudomonadati</taxon>
        <taxon>Pseudomonadota</taxon>
        <taxon>Alphaproteobacteria</taxon>
        <taxon>Rickettsiales</taxon>
        <taxon>Anaplasmataceae</taxon>
        <taxon>Wolbachieae</taxon>
        <taxon>Wolbachia</taxon>
    </lineage>
</organism>
<accession>C0R310</accession>
<proteinExistence type="inferred from homology"/>
<evidence type="ECO:0000255" key="1">
    <source>
        <dbReference type="HAMAP-Rule" id="MF_00508"/>
    </source>
</evidence>
<evidence type="ECO:0000305" key="2"/>
<keyword id="KW-0687">Ribonucleoprotein</keyword>
<keyword id="KW-0689">Ribosomal protein</keyword>
<comment type="function">
    <text evidence="1">Involved in the binding of tRNA to the ribosomes.</text>
</comment>
<comment type="subunit">
    <text evidence="1">Part of the 30S ribosomal subunit.</text>
</comment>
<comment type="similarity">
    <text evidence="1">Belongs to the universal ribosomal protein uS10 family.</text>
</comment>